<accession>C0MCB7</accession>
<comment type="function">
    <text evidence="1">Binds 23S rRNA and is also seen to make contacts with the A and possibly P site tRNAs.</text>
</comment>
<comment type="subunit">
    <text evidence="1">Part of the 50S ribosomal subunit.</text>
</comment>
<comment type="similarity">
    <text evidence="1">Belongs to the universal ribosomal protein uL16 family.</text>
</comment>
<proteinExistence type="inferred from homology"/>
<organism>
    <name type="scientific">Streptococcus equi subsp. zooepidemicus (strain H70)</name>
    <dbReference type="NCBI Taxonomy" id="553483"/>
    <lineage>
        <taxon>Bacteria</taxon>
        <taxon>Bacillati</taxon>
        <taxon>Bacillota</taxon>
        <taxon>Bacilli</taxon>
        <taxon>Lactobacillales</taxon>
        <taxon>Streptococcaceae</taxon>
        <taxon>Streptococcus</taxon>
    </lineage>
</organism>
<evidence type="ECO:0000255" key="1">
    <source>
        <dbReference type="HAMAP-Rule" id="MF_01342"/>
    </source>
</evidence>
<evidence type="ECO:0000305" key="2"/>
<name>RL16_STRS7</name>
<protein>
    <recommendedName>
        <fullName evidence="1">Large ribosomal subunit protein uL16</fullName>
    </recommendedName>
    <alternativeName>
        <fullName evidence="2">50S ribosomal protein L16</fullName>
    </alternativeName>
</protein>
<dbReference type="EMBL" id="FM204884">
    <property type="protein sequence ID" value="CAW97657.1"/>
    <property type="molecule type" value="Genomic_DNA"/>
</dbReference>
<dbReference type="SMR" id="C0MCB7"/>
<dbReference type="KEGG" id="seq:SZO_00570"/>
<dbReference type="eggNOG" id="COG0197">
    <property type="taxonomic scope" value="Bacteria"/>
</dbReference>
<dbReference type="HOGENOM" id="CLU_078858_2_1_9"/>
<dbReference type="Proteomes" id="UP000001368">
    <property type="component" value="Chromosome"/>
</dbReference>
<dbReference type="GO" id="GO:0022625">
    <property type="term" value="C:cytosolic large ribosomal subunit"/>
    <property type="evidence" value="ECO:0007669"/>
    <property type="project" value="TreeGrafter"/>
</dbReference>
<dbReference type="GO" id="GO:0019843">
    <property type="term" value="F:rRNA binding"/>
    <property type="evidence" value="ECO:0007669"/>
    <property type="project" value="UniProtKB-UniRule"/>
</dbReference>
<dbReference type="GO" id="GO:0003735">
    <property type="term" value="F:structural constituent of ribosome"/>
    <property type="evidence" value="ECO:0007669"/>
    <property type="project" value="InterPro"/>
</dbReference>
<dbReference type="GO" id="GO:0000049">
    <property type="term" value="F:tRNA binding"/>
    <property type="evidence" value="ECO:0007669"/>
    <property type="project" value="UniProtKB-KW"/>
</dbReference>
<dbReference type="GO" id="GO:0006412">
    <property type="term" value="P:translation"/>
    <property type="evidence" value="ECO:0007669"/>
    <property type="project" value="UniProtKB-UniRule"/>
</dbReference>
<dbReference type="CDD" id="cd01433">
    <property type="entry name" value="Ribosomal_L16_L10e"/>
    <property type="match status" value="1"/>
</dbReference>
<dbReference type="FunFam" id="3.90.1170.10:FF:000001">
    <property type="entry name" value="50S ribosomal protein L16"/>
    <property type="match status" value="1"/>
</dbReference>
<dbReference type="Gene3D" id="3.90.1170.10">
    <property type="entry name" value="Ribosomal protein L10e/L16"/>
    <property type="match status" value="1"/>
</dbReference>
<dbReference type="HAMAP" id="MF_01342">
    <property type="entry name" value="Ribosomal_uL16"/>
    <property type="match status" value="1"/>
</dbReference>
<dbReference type="InterPro" id="IPR047873">
    <property type="entry name" value="Ribosomal_uL16"/>
</dbReference>
<dbReference type="InterPro" id="IPR000114">
    <property type="entry name" value="Ribosomal_uL16_bact-type"/>
</dbReference>
<dbReference type="InterPro" id="IPR020798">
    <property type="entry name" value="Ribosomal_uL16_CS"/>
</dbReference>
<dbReference type="InterPro" id="IPR016180">
    <property type="entry name" value="Ribosomal_uL16_dom"/>
</dbReference>
<dbReference type="InterPro" id="IPR036920">
    <property type="entry name" value="Ribosomal_uL16_sf"/>
</dbReference>
<dbReference type="NCBIfam" id="TIGR01164">
    <property type="entry name" value="rplP_bact"/>
    <property type="match status" value="1"/>
</dbReference>
<dbReference type="PANTHER" id="PTHR12220">
    <property type="entry name" value="50S/60S RIBOSOMAL PROTEIN L16"/>
    <property type="match status" value="1"/>
</dbReference>
<dbReference type="PANTHER" id="PTHR12220:SF13">
    <property type="entry name" value="LARGE RIBOSOMAL SUBUNIT PROTEIN UL16M"/>
    <property type="match status" value="1"/>
</dbReference>
<dbReference type="Pfam" id="PF00252">
    <property type="entry name" value="Ribosomal_L16"/>
    <property type="match status" value="1"/>
</dbReference>
<dbReference type="PRINTS" id="PR00060">
    <property type="entry name" value="RIBOSOMALL16"/>
</dbReference>
<dbReference type="SUPFAM" id="SSF54686">
    <property type="entry name" value="Ribosomal protein L16p/L10e"/>
    <property type="match status" value="1"/>
</dbReference>
<dbReference type="PROSITE" id="PS00586">
    <property type="entry name" value="RIBOSOMAL_L16_1"/>
    <property type="match status" value="1"/>
</dbReference>
<dbReference type="PROSITE" id="PS00701">
    <property type="entry name" value="RIBOSOMAL_L16_2"/>
    <property type="match status" value="1"/>
</dbReference>
<sequence>MLVPKRVKHRREFRGKMRGEAKGGKEVSFGEYGLQATTSSWITNRQIEAARIAMTRYMKRGGKVWIKIFPHKSYTAKAIGVRMGSGKGAPEGWVAPVKRGKVMFEVAGVSEEIAREALRLASHKLPVKCKFVKREAE</sequence>
<gene>
    <name evidence="1" type="primary">rplP</name>
    <name type="ordered locus">SZO_00570</name>
</gene>
<feature type="chain" id="PRO_1000214745" description="Large ribosomal subunit protein uL16">
    <location>
        <begin position="1"/>
        <end position="137"/>
    </location>
</feature>
<reference key="1">
    <citation type="journal article" date="2009" name="PLoS Pathog.">
        <title>Genomic evidence for the evolution of Streptococcus equi: host restriction, increased virulence, and genetic exchange with human pathogens.</title>
        <authorList>
            <person name="Holden M.T.G."/>
            <person name="Heather Z."/>
            <person name="Paillot R."/>
            <person name="Steward K.F."/>
            <person name="Webb K."/>
            <person name="Ainslie F."/>
            <person name="Jourdan T."/>
            <person name="Bason N.C."/>
            <person name="Holroyd N.E."/>
            <person name="Mungall K."/>
            <person name="Quail M.A."/>
            <person name="Sanders M."/>
            <person name="Simmonds M."/>
            <person name="Willey D."/>
            <person name="Brooks K."/>
            <person name="Aanensen D.M."/>
            <person name="Spratt B.G."/>
            <person name="Jolley K.A."/>
            <person name="Maiden M.C.J."/>
            <person name="Kehoe M."/>
            <person name="Chanter N."/>
            <person name="Bentley S.D."/>
            <person name="Robinson C."/>
            <person name="Maskell D.J."/>
            <person name="Parkhill J."/>
            <person name="Waller A.S."/>
        </authorList>
    </citation>
    <scope>NUCLEOTIDE SEQUENCE [LARGE SCALE GENOMIC DNA]</scope>
    <source>
        <strain>H70</strain>
    </source>
</reference>
<keyword id="KW-0687">Ribonucleoprotein</keyword>
<keyword id="KW-0689">Ribosomal protein</keyword>
<keyword id="KW-0694">RNA-binding</keyword>
<keyword id="KW-0699">rRNA-binding</keyword>
<keyword id="KW-0820">tRNA-binding</keyword>